<evidence type="ECO:0000255" key="1">
    <source>
        <dbReference type="PROSITE-ProRule" id="PRU00625"/>
    </source>
</evidence>
<evidence type="ECO:0000256" key="2">
    <source>
        <dbReference type="SAM" id="MobiDB-lite"/>
    </source>
</evidence>
<evidence type="ECO:0000269" key="3">
    <source>
    </source>
</evidence>
<evidence type="ECO:0000269" key="4">
    <source>
    </source>
</evidence>
<evidence type="ECO:0000269" key="5">
    <source>
    </source>
</evidence>
<evidence type="ECO:0000303" key="6">
    <source>
    </source>
</evidence>
<evidence type="ECO:0000305" key="7"/>
<evidence type="ECO:0000312" key="8">
    <source>
        <dbReference type="Araport" id="AT1G16490"/>
    </source>
</evidence>
<evidence type="ECO:0000312" key="9">
    <source>
        <dbReference type="EMBL" id="AAD34700.1"/>
    </source>
</evidence>
<organism>
    <name type="scientific">Arabidopsis thaliana</name>
    <name type="common">Mouse-ear cress</name>
    <dbReference type="NCBI Taxonomy" id="3702"/>
    <lineage>
        <taxon>Eukaryota</taxon>
        <taxon>Viridiplantae</taxon>
        <taxon>Streptophyta</taxon>
        <taxon>Embryophyta</taxon>
        <taxon>Tracheophyta</taxon>
        <taxon>Spermatophyta</taxon>
        <taxon>Magnoliopsida</taxon>
        <taxon>eudicotyledons</taxon>
        <taxon>Gunneridae</taxon>
        <taxon>Pentapetalae</taxon>
        <taxon>rosids</taxon>
        <taxon>malvids</taxon>
        <taxon>Brassicales</taxon>
        <taxon>Brassicaceae</taxon>
        <taxon>Camelineae</taxon>
        <taxon>Arabidopsis</taxon>
    </lineage>
</organism>
<dbReference type="EMBL" id="AB493459">
    <property type="protein sequence ID" value="BAH30297.1"/>
    <property type="molecule type" value="mRNA"/>
</dbReference>
<dbReference type="EMBL" id="AC006341">
    <property type="protein sequence ID" value="AAD34700.1"/>
    <property type="molecule type" value="Genomic_DNA"/>
</dbReference>
<dbReference type="EMBL" id="CP002684">
    <property type="protein sequence ID" value="AEE29461.1"/>
    <property type="molecule type" value="Genomic_DNA"/>
</dbReference>
<dbReference type="EMBL" id="AY085461">
    <property type="protein sequence ID" value="AAM62687.1"/>
    <property type="molecule type" value="mRNA"/>
</dbReference>
<dbReference type="EMBL" id="AF062893">
    <property type="protein sequence ID" value="AAC83615.1"/>
    <property type="molecule type" value="mRNA"/>
</dbReference>
<dbReference type="PIR" id="D86300">
    <property type="entry name" value="D86300"/>
</dbReference>
<dbReference type="PIR" id="T51665">
    <property type="entry name" value="T51665"/>
</dbReference>
<dbReference type="RefSeq" id="NP_173098.1">
    <property type="nucleotide sequence ID" value="NM_101514.3"/>
</dbReference>
<dbReference type="SMR" id="Q9SA47"/>
<dbReference type="IntAct" id="Q9SA47">
    <property type="interactions" value="1"/>
</dbReference>
<dbReference type="STRING" id="3702.Q9SA47"/>
<dbReference type="PaxDb" id="3702-AT1G16490.1"/>
<dbReference type="EnsemblPlants" id="AT1G16490.1">
    <property type="protein sequence ID" value="AT1G16490.1"/>
    <property type="gene ID" value="AT1G16490"/>
</dbReference>
<dbReference type="GeneID" id="838219"/>
<dbReference type="Gramene" id="AT1G16490.1">
    <property type="protein sequence ID" value="AT1G16490.1"/>
    <property type="gene ID" value="AT1G16490"/>
</dbReference>
<dbReference type="KEGG" id="ath:AT1G16490"/>
<dbReference type="Araport" id="AT1G16490"/>
<dbReference type="TAIR" id="AT1G16490">
    <property type="gene designation" value="MYB58"/>
</dbReference>
<dbReference type="eggNOG" id="KOG0048">
    <property type="taxonomic scope" value="Eukaryota"/>
</dbReference>
<dbReference type="HOGENOM" id="CLU_028567_6_2_1"/>
<dbReference type="InParanoid" id="Q9SA47"/>
<dbReference type="OMA" id="FQYLEGH"/>
<dbReference type="PhylomeDB" id="Q9SA47"/>
<dbReference type="PRO" id="PR:Q9SA47"/>
<dbReference type="Proteomes" id="UP000006548">
    <property type="component" value="Chromosome 1"/>
</dbReference>
<dbReference type="ExpressionAtlas" id="Q9SA47">
    <property type="expression patterns" value="differential"/>
</dbReference>
<dbReference type="GO" id="GO:0005634">
    <property type="term" value="C:nucleus"/>
    <property type="evidence" value="ECO:0000314"/>
    <property type="project" value="UniProtKB"/>
</dbReference>
<dbReference type="GO" id="GO:0003700">
    <property type="term" value="F:DNA-binding transcription factor activity"/>
    <property type="evidence" value="ECO:0000314"/>
    <property type="project" value="UniProtKB"/>
</dbReference>
<dbReference type="GO" id="GO:0000976">
    <property type="term" value="F:transcription cis-regulatory region binding"/>
    <property type="evidence" value="ECO:0000353"/>
    <property type="project" value="TAIR"/>
</dbReference>
<dbReference type="GO" id="GO:0009809">
    <property type="term" value="P:lignin biosynthetic process"/>
    <property type="evidence" value="ECO:0000315"/>
    <property type="project" value="TAIR"/>
</dbReference>
<dbReference type="GO" id="GO:0045893">
    <property type="term" value="P:positive regulation of DNA-templated transcription"/>
    <property type="evidence" value="ECO:0000314"/>
    <property type="project" value="TAIR"/>
</dbReference>
<dbReference type="GO" id="GO:2000652">
    <property type="term" value="P:regulation of secondary cell wall biogenesis"/>
    <property type="evidence" value="ECO:0000315"/>
    <property type="project" value="TAIR"/>
</dbReference>
<dbReference type="GO" id="GO:0009416">
    <property type="term" value="P:response to light stimulus"/>
    <property type="evidence" value="ECO:0000270"/>
    <property type="project" value="UniProtKB"/>
</dbReference>
<dbReference type="CDD" id="cd00167">
    <property type="entry name" value="SANT"/>
    <property type="match status" value="2"/>
</dbReference>
<dbReference type="FunFam" id="1.10.10.60:FF:000623">
    <property type="entry name" value="Transcription factor MYB4"/>
    <property type="match status" value="1"/>
</dbReference>
<dbReference type="FunFam" id="1.10.10.60:FF:000015">
    <property type="entry name" value="Transcription factor RAX3"/>
    <property type="match status" value="1"/>
</dbReference>
<dbReference type="Gene3D" id="1.10.10.60">
    <property type="entry name" value="Homeodomain-like"/>
    <property type="match status" value="2"/>
</dbReference>
<dbReference type="InterPro" id="IPR009057">
    <property type="entry name" value="Homeodomain-like_sf"/>
</dbReference>
<dbReference type="InterPro" id="IPR017930">
    <property type="entry name" value="Myb_dom"/>
</dbReference>
<dbReference type="InterPro" id="IPR015495">
    <property type="entry name" value="Myb_TF_plants"/>
</dbReference>
<dbReference type="InterPro" id="IPR001005">
    <property type="entry name" value="SANT/Myb"/>
</dbReference>
<dbReference type="PANTHER" id="PTHR10641">
    <property type="entry name" value="MYB FAMILY TRANSCRIPTION FACTOR"/>
    <property type="match status" value="1"/>
</dbReference>
<dbReference type="PANTHER" id="PTHR10641:SF1169">
    <property type="entry name" value="TRANSCRIPTION FACTOR MYB58"/>
    <property type="match status" value="1"/>
</dbReference>
<dbReference type="Pfam" id="PF00249">
    <property type="entry name" value="Myb_DNA-binding"/>
    <property type="match status" value="2"/>
</dbReference>
<dbReference type="SMART" id="SM00717">
    <property type="entry name" value="SANT"/>
    <property type="match status" value="2"/>
</dbReference>
<dbReference type="SUPFAM" id="SSF46689">
    <property type="entry name" value="Homeodomain-like"/>
    <property type="match status" value="1"/>
</dbReference>
<dbReference type="PROSITE" id="PS51294">
    <property type="entry name" value="HTH_MYB"/>
    <property type="match status" value="2"/>
</dbReference>
<comment type="function">
    <text evidence="3">Transcriptional activator that binds DNA to the AC cis-elements 5'-ACCTACC-3', 5'-ACCAACC-3' and 5'-ACCTAAC-3' of promoters and specifically activates lignin biosynthetic genes during secondary wall formation mediated by SND1.</text>
</comment>
<comment type="subcellular location">
    <subcellularLocation>
        <location evidence="1 3">Nucleus</location>
    </subcellularLocation>
</comment>
<comment type="tissue specificity">
    <text evidence="3 5">Expressed in leaves (PubMed:9839469). Specifically expressed in fibers and vessels undergoing secondary wall thickening, especially in inflorescence stems (PubMed:19122102).</text>
</comment>
<comment type="developmental stage">
    <text evidence="3">In nonelongating internodes, highly expressed in interfascicular fibers and xylem cells but not in parenchymatous pith cells. In elongating internodes, predominantly expressed in protoxylem vessels.</text>
</comment>
<comment type="induction">
    <text evidence="3 4 5">Slightly induced by light (PubMed:9839469). Regulated by the SND1 close homologs NST1, NST2, VND6, and VND7 and their downstream targets MYB46 and MYB83 (PubMed:19122102, PubMed:22197883).</text>
</comment>
<comment type="disruption phenotype">
    <text evidence="3">Reduction in secondary wall thickening and lignin content.</text>
</comment>
<keyword id="KW-0010">Activator</keyword>
<keyword id="KW-0238">DNA-binding</keyword>
<keyword id="KW-0438">Lignin biosynthesis</keyword>
<keyword id="KW-0539">Nucleus</keyword>
<keyword id="KW-1185">Reference proteome</keyword>
<keyword id="KW-0677">Repeat</keyword>
<keyword id="KW-0804">Transcription</keyword>
<keyword id="KW-0805">Transcription regulation</keyword>
<name>MYB58_ARATH</name>
<proteinExistence type="evidence at transcript level"/>
<feature type="chain" id="PRO_0000438719" description="Transcription factor MYB58">
    <location>
        <begin position="1"/>
        <end position="274"/>
    </location>
</feature>
<feature type="domain" description="HTH myb-type 1" evidence="1">
    <location>
        <begin position="11"/>
        <end position="63"/>
    </location>
</feature>
<feature type="domain" description="HTH myb-type 2" evidence="1">
    <location>
        <begin position="64"/>
        <end position="118"/>
    </location>
</feature>
<feature type="DNA-binding region" description="H-T-H motif" evidence="1">
    <location>
        <begin position="39"/>
        <end position="63"/>
    </location>
</feature>
<feature type="DNA-binding region" description="H-T-H motif" evidence="1">
    <location>
        <begin position="91"/>
        <end position="114"/>
    </location>
</feature>
<feature type="region of interest" description="Disordered" evidence="2">
    <location>
        <begin position="121"/>
        <end position="160"/>
    </location>
</feature>
<feature type="region of interest" description="Disordered" evidence="2">
    <location>
        <begin position="237"/>
        <end position="274"/>
    </location>
</feature>
<feature type="compositionally biased region" description="Low complexity" evidence="2">
    <location>
        <begin position="263"/>
        <end position="274"/>
    </location>
</feature>
<feature type="sequence conflict" description="In Ref. 4; AAM62687." evidence="7" ref="4">
    <original>E</original>
    <variation>D</variation>
    <location>
        <position position="225"/>
    </location>
</feature>
<feature type="sequence conflict" description="In Ref. 4; AAM62687." evidence="7" ref="4">
    <location>
        <begin position="247"/>
        <end position="248"/>
    </location>
</feature>
<feature type="sequence conflict" description="In Ref. 5; AAC83615." evidence="7" ref="5">
    <location>
        <position position="247"/>
    </location>
</feature>
<reference key="1">
    <citation type="submission" date="2009-03" db="EMBL/GenBank/DDBJ databases">
        <title>ORF cloning and analysis of Arabidopsis transcription factor genes.</title>
        <authorList>
            <person name="Fujita M."/>
        </authorList>
    </citation>
    <scope>NUCLEOTIDE SEQUENCE [MRNA]</scope>
</reference>
<reference key="2">
    <citation type="journal article" date="2000" name="Nature">
        <title>Sequence and analysis of chromosome 1 of the plant Arabidopsis thaliana.</title>
        <authorList>
            <person name="Theologis A."/>
            <person name="Ecker J.R."/>
            <person name="Palm C.J."/>
            <person name="Federspiel N.A."/>
            <person name="Kaul S."/>
            <person name="White O."/>
            <person name="Alonso J."/>
            <person name="Altafi H."/>
            <person name="Araujo R."/>
            <person name="Bowman C.L."/>
            <person name="Brooks S.Y."/>
            <person name="Buehler E."/>
            <person name="Chan A."/>
            <person name="Chao Q."/>
            <person name="Chen H."/>
            <person name="Cheuk R.F."/>
            <person name="Chin C.W."/>
            <person name="Chung M.K."/>
            <person name="Conn L."/>
            <person name="Conway A.B."/>
            <person name="Conway A.R."/>
            <person name="Creasy T.H."/>
            <person name="Dewar K."/>
            <person name="Dunn P."/>
            <person name="Etgu P."/>
            <person name="Feldblyum T.V."/>
            <person name="Feng J.-D."/>
            <person name="Fong B."/>
            <person name="Fujii C.Y."/>
            <person name="Gill J.E."/>
            <person name="Goldsmith A.D."/>
            <person name="Haas B."/>
            <person name="Hansen N.F."/>
            <person name="Hughes B."/>
            <person name="Huizar L."/>
            <person name="Hunter J.L."/>
            <person name="Jenkins J."/>
            <person name="Johnson-Hopson C."/>
            <person name="Khan S."/>
            <person name="Khaykin E."/>
            <person name="Kim C.J."/>
            <person name="Koo H.L."/>
            <person name="Kremenetskaia I."/>
            <person name="Kurtz D.B."/>
            <person name="Kwan A."/>
            <person name="Lam B."/>
            <person name="Langin-Hooper S."/>
            <person name="Lee A."/>
            <person name="Lee J.M."/>
            <person name="Lenz C.A."/>
            <person name="Li J.H."/>
            <person name="Li Y.-P."/>
            <person name="Lin X."/>
            <person name="Liu S.X."/>
            <person name="Liu Z.A."/>
            <person name="Luros J.S."/>
            <person name="Maiti R."/>
            <person name="Marziali A."/>
            <person name="Militscher J."/>
            <person name="Miranda M."/>
            <person name="Nguyen M."/>
            <person name="Nierman W.C."/>
            <person name="Osborne B.I."/>
            <person name="Pai G."/>
            <person name="Peterson J."/>
            <person name="Pham P.K."/>
            <person name="Rizzo M."/>
            <person name="Rooney T."/>
            <person name="Rowley D."/>
            <person name="Sakano H."/>
            <person name="Salzberg S.L."/>
            <person name="Schwartz J.R."/>
            <person name="Shinn P."/>
            <person name="Southwick A.M."/>
            <person name="Sun H."/>
            <person name="Tallon L.J."/>
            <person name="Tambunga G."/>
            <person name="Toriumi M.J."/>
            <person name="Town C.D."/>
            <person name="Utterback T."/>
            <person name="Van Aken S."/>
            <person name="Vaysberg M."/>
            <person name="Vysotskaia V.S."/>
            <person name="Walker M."/>
            <person name="Wu D."/>
            <person name="Yu G."/>
            <person name="Fraser C.M."/>
            <person name="Venter J.C."/>
            <person name="Davis R.W."/>
        </authorList>
    </citation>
    <scope>NUCLEOTIDE SEQUENCE [LARGE SCALE GENOMIC DNA]</scope>
    <source>
        <strain>cv. Columbia</strain>
    </source>
</reference>
<reference key="3">
    <citation type="journal article" date="2017" name="Plant J.">
        <title>Araport11: a complete reannotation of the Arabidopsis thaliana reference genome.</title>
        <authorList>
            <person name="Cheng C.Y."/>
            <person name="Krishnakumar V."/>
            <person name="Chan A.P."/>
            <person name="Thibaud-Nissen F."/>
            <person name="Schobel S."/>
            <person name="Town C.D."/>
        </authorList>
    </citation>
    <scope>GENOME REANNOTATION</scope>
    <source>
        <strain>cv. Columbia</strain>
    </source>
</reference>
<reference key="4">
    <citation type="submission" date="2002-03" db="EMBL/GenBank/DDBJ databases">
        <title>Full-length cDNA from Arabidopsis thaliana.</title>
        <authorList>
            <person name="Brover V.V."/>
            <person name="Troukhan M.E."/>
            <person name="Alexandrov N.A."/>
            <person name="Lu Y.-P."/>
            <person name="Flavell R.B."/>
            <person name="Feldmann K.A."/>
        </authorList>
    </citation>
    <scope>NUCLEOTIDE SEQUENCE [LARGE SCALE MRNA]</scope>
</reference>
<reference key="5">
    <citation type="journal article" date="1998" name="Plant J.">
        <title>Towards functional characterisation of the members of the R2R3-MYB gene family from Arabidopsis thaliana.</title>
        <authorList>
            <person name="Kranz H.D."/>
            <person name="Denekamp M."/>
            <person name="Greco R."/>
            <person name="Jin H.-L."/>
            <person name="Leyva A."/>
            <person name="Meissner R.C."/>
            <person name="Petroni K."/>
            <person name="Urzainqui A."/>
            <person name="Bevan M."/>
            <person name="Martin C."/>
            <person name="Smeekens S."/>
            <person name="Tonelli C."/>
            <person name="Paz-Ares J."/>
            <person name="Weisshaar B."/>
        </authorList>
    </citation>
    <scope>NUCLEOTIDE SEQUENCE [MRNA] OF 73-273</scope>
    <scope>TISSUE SPECIFICITY</scope>
    <scope>INDUCTION BY LIGHT</scope>
    <scope>GENE FAMILY</scope>
    <scope>NOMENCLATURE</scope>
    <source>
        <strain>cv. Columbia</strain>
    </source>
</reference>
<reference key="6">
    <citation type="journal article" date="2001" name="Curr. Opin. Plant Biol.">
        <title>The R2R3-MYB gene family in Arabidopsis thaliana.</title>
        <authorList>
            <person name="Stracke R."/>
            <person name="Werber M."/>
            <person name="Weisshaar B."/>
        </authorList>
    </citation>
    <scope>GENE FAMILY</scope>
    <scope>NOMENCLATURE</scope>
    <source>
        <strain>cv. Columbia</strain>
    </source>
</reference>
<reference key="7">
    <citation type="journal article" date="2009" name="Plant Cell">
        <title>MYB58 and MYB63 are transcriptional activators of the lignin biosynthetic pathway during secondary cell wall formation in Arabidopsis.</title>
        <authorList>
            <person name="Zhou J."/>
            <person name="Lee C."/>
            <person name="Zhong R."/>
            <person name="Ye Z.-H."/>
        </authorList>
    </citation>
    <scope>FUNCTION</scope>
    <scope>DISRUPTION PHENOTYPE</scope>
    <scope>TISSUE SPECIFICITY</scope>
    <scope>DEVELOPMENTAL STAGE</scope>
    <scope>INDUCTION BY SND1 CLOSE HOMOLOGS</scope>
    <scope>SUBCELLULAR LOCATION</scope>
    <source>
        <strain>cv. Columbia</strain>
    </source>
</reference>
<reference key="8">
    <citation type="journal article" date="2009" name="Plant Signal. Behav.">
        <title>Transcriptional regulation of lignin biosynthesis.</title>
        <authorList>
            <person name="Zhong R."/>
            <person name="Ye Z.H."/>
        </authorList>
    </citation>
    <scope>REVIEW</scope>
</reference>
<reference key="9">
    <citation type="journal article" date="2012" name="Plant Cell Physiol.">
        <title>MYB46 and MYB83 bind to the SMRE sites and directly activate a suite of transcription factors and secondary wall biosynthetic genes.</title>
        <authorList>
            <person name="Zhong R."/>
            <person name="Ye Z.H."/>
        </authorList>
    </citation>
    <scope>INDUCTION BY MYB46 AND MYB83</scope>
</reference>
<gene>
    <name evidence="6" type="primary">MYB58</name>
    <name evidence="8" type="ordered locus">At1g16490</name>
    <name evidence="9" type="ORF">F3O9.29</name>
</gene>
<sequence length="274" mass="31461">MGKGRAPCCDKTKVKRGPWSHDEDLKLISFIHKNGHENWRSLPKQAGLLRCGKSCRLRWINYLRPDVKRGNFSAEEEDTIIKLHQSFGNKWSKIASKLPGRTDNEIKNVWHTHLKKRLSSETNLNADEAGSKGSLNEEENSQESSPNASMSFAGSNISSKDDDAQISQMFEHILTYSEFTGMLQEVDKPELLEMPFDLDPDIWSFIDGSDSFQQPENRALQESEEDEVDKWFKHLESELGLEENDNQQQQQQHKQGTEDEHSSSLLESYELLIH</sequence>
<accession>Q9SA47</accession>
<accession>Q8LEE5</accession>
<accession>Q9ZTD4</accession>
<protein>
    <recommendedName>
        <fullName evidence="6">Transcription factor MYB58</fullName>
    </recommendedName>
    <alternativeName>
        <fullName evidence="6">Myb-related protein 58</fullName>
        <shortName evidence="6">AtMYB58</shortName>
    </alternativeName>
</protein>